<evidence type="ECO:0000255" key="1">
    <source>
        <dbReference type="HAMAP-Rule" id="MF_00144"/>
    </source>
</evidence>
<organism>
    <name type="scientific">Francisella philomiragia subsp. philomiragia (strain ATCC 25017 / CCUG 19701 / FSC 153 / O#319-036)</name>
    <dbReference type="NCBI Taxonomy" id="484022"/>
    <lineage>
        <taxon>Bacteria</taxon>
        <taxon>Pseudomonadati</taxon>
        <taxon>Pseudomonadota</taxon>
        <taxon>Gammaproteobacteria</taxon>
        <taxon>Thiotrichales</taxon>
        <taxon>Francisellaceae</taxon>
        <taxon>Francisella</taxon>
    </lineage>
</organism>
<feature type="chain" id="PRO_1000076565" description="tRNA-specific 2-thiouridylase MnmA">
    <location>
        <begin position="1"/>
        <end position="359"/>
    </location>
</feature>
<feature type="region of interest" description="Interaction with target base in tRNA" evidence="1">
    <location>
        <begin position="95"/>
        <end position="97"/>
    </location>
</feature>
<feature type="region of interest" description="Interaction with tRNA" evidence="1">
    <location>
        <begin position="147"/>
        <end position="149"/>
    </location>
</feature>
<feature type="region of interest" description="Interaction with tRNA" evidence="1">
    <location>
        <begin position="309"/>
        <end position="310"/>
    </location>
</feature>
<feature type="active site" description="Nucleophile" evidence="1">
    <location>
        <position position="100"/>
    </location>
</feature>
<feature type="active site" description="Cysteine persulfide intermediate" evidence="1">
    <location>
        <position position="197"/>
    </location>
</feature>
<feature type="binding site" evidence="1">
    <location>
        <begin position="9"/>
        <end position="16"/>
    </location>
    <ligand>
        <name>ATP</name>
        <dbReference type="ChEBI" id="CHEBI:30616"/>
    </ligand>
</feature>
<feature type="binding site" evidence="1">
    <location>
        <position position="35"/>
    </location>
    <ligand>
        <name>ATP</name>
        <dbReference type="ChEBI" id="CHEBI:30616"/>
    </ligand>
</feature>
<feature type="binding site" evidence="1">
    <location>
        <position position="124"/>
    </location>
    <ligand>
        <name>ATP</name>
        <dbReference type="ChEBI" id="CHEBI:30616"/>
    </ligand>
</feature>
<feature type="site" description="Interaction with tRNA" evidence="1">
    <location>
        <position position="125"/>
    </location>
</feature>
<feature type="site" description="Interaction with tRNA" evidence="1">
    <location>
        <position position="342"/>
    </location>
</feature>
<feature type="disulfide bond" description="Alternate" evidence="1">
    <location>
        <begin position="100"/>
        <end position="197"/>
    </location>
</feature>
<proteinExistence type="inferred from homology"/>
<protein>
    <recommendedName>
        <fullName evidence="1">tRNA-specific 2-thiouridylase MnmA</fullName>
        <ecNumber evidence="1">2.8.1.13</ecNumber>
    </recommendedName>
</protein>
<comment type="function">
    <text evidence="1">Catalyzes the 2-thiolation of uridine at the wobble position (U34) of tRNA, leading to the formation of s(2)U34.</text>
</comment>
<comment type="catalytic activity">
    <reaction evidence="1">
        <text>S-sulfanyl-L-cysteinyl-[protein] + uridine(34) in tRNA + AH2 + ATP = 2-thiouridine(34) in tRNA + L-cysteinyl-[protein] + A + AMP + diphosphate + H(+)</text>
        <dbReference type="Rhea" id="RHEA:47032"/>
        <dbReference type="Rhea" id="RHEA-COMP:10131"/>
        <dbReference type="Rhea" id="RHEA-COMP:11726"/>
        <dbReference type="Rhea" id="RHEA-COMP:11727"/>
        <dbReference type="Rhea" id="RHEA-COMP:11728"/>
        <dbReference type="ChEBI" id="CHEBI:13193"/>
        <dbReference type="ChEBI" id="CHEBI:15378"/>
        <dbReference type="ChEBI" id="CHEBI:17499"/>
        <dbReference type="ChEBI" id="CHEBI:29950"/>
        <dbReference type="ChEBI" id="CHEBI:30616"/>
        <dbReference type="ChEBI" id="CHEBI:33019"/>
        <dbReference type="ChEBI" id="CHEBI:61963"/>
        <dbReference type="ChEBI" id="CHEBI:65315"/>
        <dbReference type="ChEBI" id="CHEBI:87170"/>
        <dbReference type="ChEBI" id="CHEBI:456215"/>
        <dbReference type="EC" id="2.8.1.13"/>
    </reaction>
</comment>
<comment type="subcellular location">
    <subcellularLocation>
        <location evidence="1">Cytoplasm</location>
    </subcellularLocation>
</comment>
<comment type="similarity">
    <text evidence="1">Belongs to the MnmA/TRMU family.</text>
</comment>
<gene>
    <name evidence="1" type="primary">mnmA</name>
    <name type="synonym">trmU</name>
    <name type="ordered locus">Fphi_0719</name>
</gene>
<dbReference type="EC" id="2.8.1.13" evidence="1"/>
<dbReference type="EMBL" id="CP000937">
    <property type="protein sequence ID" value="ABZ86940.1"/>
    <property type="molecule type" value="Genomic_DNA"/>
</dbReference>
<dbReference type="SMR" id="B0TW32"/>
<dbReference type="KEGG" id="fph:Fphi_0719"/>
<dbReference type="eggNOG" id="COG0482">
    <property type="taxonomic scope" value="Bacteria"/>
</dbReference>
<dbReference type="HOGENOM" id="CLU_035188_1_0_6"/>
<dbReference type="GO" id="GO:0005737">
    <property type="term" value="C:cytoplasm"/>
    <property type="evidence" value="ECO:0007669"/>
    <property type="project" value="UniProtKB-SubCell"/>
</dbReference>
<dbReference type="GO" id="GO:0005524">
    <property type="term" value="F:ATP binding"/>
    <property type="evidence" value="ECO:0007669"/>
    <property type="project" value="UniProtKB-KW"/>
</dbReference>
<dbReference type="GO" id="GO:0000049">
    <property type="term" value="F:tRNA binding"/>
    <property type="evidence" value="ECO:0007669"/>
    <property type="project" value="UniProtKB-KW"/>
</dbReference>
<dbReference type="GO" id="GO:0103016">
    <property type="term" value="F:tRNA-uridine 2-sulfurtransferase activity"/>
    <property type="evidence" value="ECO:0007669"/>
    <property type="project" value="UniProtKB-EC"/>
</dbReference>
<dbReference type="GO" id="GO:0002143">
    <property type="term" value="P:tRNA wobble position uridine thiolation"/>
    <property type="evidence" value="ECO:0007669"/>
    <property type="project" value="TreeGrafter"/>
</dbReference>
<dbReference type="CDD" id="cd01998">
    <property type="entry name" value="MnmA_TRMU-like"/>
    <property type="match status" value="1"/>
</dbReference>
<dbReference type="FunFam" id="2.30.30.280:FF:000001">
    <property type="entry name" value="tRNA-specific 2-thiouridylase MnmA"/>
    <property type="match status" value="1"/>
</dbReference>
<dbReference type="FunFam" id="2.40.30.10:FF:000023">
    <property type="entry name" value="tRNA-specific 2-thiouridylase MnmA"/>
    <property type="match status" value="1"/>
</dbReference>
<dbReference type="FunFam" id="3.40.50.620:FF:000004">
    <property type="entry name" value="tRNA-specific 2-thiouridylase MnmA"/>
    <property type="match status" value="1"/>
</dbReference>
<dbReference type="Gene3D" id="2.30.30.280">
    <property type="entry name" value="Adenine nucleotide alpha hydrolases-like domains"/>
    <property type="match status" value="1"/>
</dbReference>
<dbReference type="Gene3D" id="3.40.50.620">
    <property type="entry name" value="HUPs"/>
    <property type="match status" value="1"/>
</dbReference>
<dbReference type="Gene3D" id="2.40.30.10">
    <property type="entry name" value="Translation factors"/>
    <property type="match status" value="1"/>
</dbReference>
<dbReference type="HAMAP" id="MF_00144">
    <property type="entry name" value="tRNA_thiouridyl_MnmA"/>
    <property type="match status" value="1"/>
</dbReference>
<dbReference type="InterPro" id="IPR004506">
    <property type="entry name" value="MnmA-like"/>
</dbReference>
<dbReference type="InterPro" id="IPR046885">
    <property type="entry name" value="MnmA-like_C"/>
</dbReference>
<dbReference type="InterPro" id="IPR046884">
    <property type="entry name" value="MnmA-like_central"/>
</dbReference>
<dbReference type="InterPro" id="IPR023382">
    <property type="entry name" value="MnmA-like_central_sf"/>
</dbReference>
<dbReference type="InterPro" id="IPR014729">
    <property type="entry name" value="Rossmann-like_a/b/a_fold"/>
</dbReference>
<dbReference type="NCBIfam" id="NF001138">
    <property type="entry name" value="PRK00143.1"/>
    <property type="match status" value="1"/>
</dbReference>
<dbReference type="NCBIfam" id="TIGR00420">
    <property type="entry name" value="trmU"/>
    <property type="match status" value="1"/>
</dbReference>
<dbReference type="PANTHER" id="PTHR11933:SF5">
    <property type="entry name" value="MITOCHONDRIAL TRNA-SPECIFIC 2-THIOURIDYLASE 1"/>
    <property type="match status" value="1"/>
</dbReference>
<dbReference type="PANTHER" id="PTHR11933">
    <property type="entry name" value="TRNA 5-METHYLAMINOMETHYL-2-THIOURIDYLATE -METHYLTRANSFERASE"/>
    <property type="match status" value="1"/>
</dbReference>
<dbReference type="Pfam" id="PF03054">
    <property type="entry name" value="tRNA_Me_trans"/>
    <property type="match status" value="1"/>
</dbReference>
<dbReference type="Pfam" id="PF20258">
    <property type="entry name" value="tRNA_Me_trans_C"/>
    <property type="match status" value="1"/>
</dbReference>
<dbReference type="Pfam" id="PF20259">
    <property type="entry name" value="tRNA_Me_trans_M"/>
    <property type="match status" value="1"/>
</dbReference>
<dbReference type="SUPFAM" id="SSF52402">
    <property type="entry name" value="Adenine nucleotide alpha hydrolases-like"/>
    <property type="match status" value="1"/>
</dbReference>
<name>MNMA_FRAP2</name>
<sequence>MQNNKIIVGISGGVDSSVSALLLKQQGYDVTGVFMKNWEEDDTDEFCSAEQHIADAQAVCDSIGIPFKKINFAAEYWDNVFEHFLTEYKAGRTPNPDILCNKEIKFKAFLSYVHLLGGDYIATGHYARTKVIDDGSVQLVKGLDDSKDQTYFLYTLGQEQLKQTMFPIGDIEKSRVREIAKENNLVTFDKKDSTGICFIGERKFKDFLSKFLPAQKGEIHDENGIKIGMHDGLMYYTIGQRQGLGIGGVKNRPEIPWFAAQKDLENNVLIAVQGHDHPMLFKDTLQAIDLSWVAGSAPADSFRCSAKVRYRQKDQPCSVEVNNDGSVNVVFDEPQRAITPGQSVVFYDNDVCLGGGIII</sequence>
<reference key="1">
    <citation type="submission" date="2007-12" db="EMBL/GenBank/DDBJ databases">
        <title>Complete sequence of chromosome of Francisella philomiragia subsp. philomiragia ATCC 25017.</title>
        <authorList>
            <consortium name="US DOE Joint Genome Institute"/>
            <person name="Copeland A."/>
            <person name="Lucas S."/>
            <person name="Lapidus A."/>
            <person name="Barry K."/>
            <person name="Detter J.C."/>
            <person name="Glavina del Rio T."/>
            <person name="Hammon N."/>
            <person name="Israni S."/>
            <person name="Dalin E."/>
            <person name="Tice H."/>
            <person name="Pitluck S."/>
            <person name="Chain P."/>
            <person name="Malfatti S."/>
            <person name="Shin M."/>
            <person name="Vergez L."/>
            <person name="Schmutz J."/>
            <person name="Larimer F."/>
            <person name="Land M."/>
            <person name="Hauser L."/>
            <person name="Richardson P."/>
        </authorList>
    </citation>
    <scope>NUCLEOTIDE SEQUENCE [LARGE SCALE GENOMIC DNA]</scope>
    <source>
        <strain>ATCC 25017 / CCUG 19701 / FSC 153 / O#319-036</strain>
    </source>
</reference>
<keyword id="KW-0067">ATP-binding</keyword>
<keyword id="KW-0963">Cytoplasm</keyword>
<keyword id="KW-1015">Disulfide bond</keyword>
<keyword id="KW-0547">Nucleotide-binding</keyword>
<keyword id="KW-0694">RNA-binding</keyword>
<keyword id="KW-0808">Transferase</keyword>
<keyword id="KW-0819">tRNA processing</keyword>
<keyword id="KW-0820">tRNA-binding</keyword>
<accession>B0TW32</accession>